<feature type="propeptide" id="PRO_0000397492" description="Removed in mature form; by autocatalysis" evidence="1">
    <location>
        <begin position="1"/>
        <end position="55"/>
    </location>
</feature>
<feature type="chain" id="PRO_0000397493" description="Proteasome subunit beta">
    <location>
        <begin position="56"/>
        <end position="282"/>
    </location>
</feature>
<feature type="active site" description="Nucleophile" evidence="1">
    <location>
        <position position="56"/>
    </location>
</feature>
<accession>C6WID8</accession>
<organism>
    <name type="scientific">Actinosynnema mirum (strain ATCC 29888 / DSM 43827 / JCM 3225 / NBRC 14064 / NCIMB 13271 / NRRL B-12336 / IMRU 3971 / 101)</name>
    <dbReference type="NCBI Taxonomy" id="446462"/>
    <lineage>
        <taxon>Bacteria</taxon>
        <taxon>Bacillati</taxon>
        <taxon>Actinomycetota</taxon>
        <taxon>Actinomycetes</taxon>
        <taxon>Pseudonocardiales</taxon>
        <taxon>Pseudonocardiaceae</taxon>
        <taxon>Actinosynnema</taxon>
    </lineage>
</organism>
<name>PSB_ACTMD</name>
<keyword id="KW-0068">Autocatalytic cleavage</keyword>
<keyword id="KW-0963">Cytoplasm</keyword>
<keyword id="KW-0378">Hydrolase</keyword>
<keyword id="KW-0645">Protease</keyword>
<keyword id="KW-0647">Proteasome</keyword>
<keyword id="KW-1185">Reference proteome</keyword>
<keyword id="KW-0888">Threonine protease</keyword>
<keyword id="KW-0865">Zymogen</keyword>
<reference key="1">
    <citation type="journal article" date="2009" name="Stand. Genomic Sci.">
        <title>Complete genome sequence of Actinosynnema mirum type strain (101).</title>
        <authorList>
            <person name="Land M."/>
            <person name="Lapidus A."/>
            <person name="Mayilraj S."/>
            <person name="Chen F."/>
            <person name="Copeland A."/>
            <person name="Del Rio T.G."/>
            <person name="Nolan M."/>
            <person name="Lucas S."/>
            <person name="Tice H."/>
            <person name="Cheng J.F."/>
            <person name="Chertkov O."/>
            <person name="Bruce D."/>
            <person name="Goodwin L."/>
            <person name="Pitluck S."/>
            <person name="Rohde M."/>
            <person name="Goker M."/>
            <person name="Pati A."/>
            <person name="Ivanova N."/>
            <person name="Mavromatis K."/>
            <person name="Chen A."/>
            <person name="Palaniappan K."/>
            <person name="Hauser L."/>
            <person name="Chang Y.J."/>
            <person name="Jeffries C.C."/>
            <person name="Brettin T."/>
            <person name="Detter J.C."/>
            <person name="Han C."/>
            <person name="Chain P."/>
            <person name="Tindall B.J."/>
            <person name="Bristow J."/>
            <person name="Eisen J.A."/>
            <person name="Markowitz V."/>
            <person name="Hugenholtz P."/>
            <person name="Kyrpides N.C."/>
            <person name="Klenk H.P."/>
        </authorList>
    </citation>
    <scope>NUCLEOTIDE SEQUENCE [LARGE SCALE GENOMIC DNA]</scope>
    <source>
        <strain>ATCC 29888 / DSM 43827 / JCM 3225 / NBRC 14064 / NCIMB 13271 / NRRL B-12336 / IMRU 3971 / 101</strain>
    </source>
</reference>
<evidence type="ECO:0000255" key="1">
    <source>
        <dbReference type="HAMAP-Rule" id="MF_02113"/>
    </source>
</evidence>
<proteinExistence type="inferred from homology"/>
<dbReference type="EC" id="3.4.25.1" evidence="1"/>
<dbReference type="EMBL" id="CP001630">
    <property type="protein sequence ID" value="ACU36181.1"/>
    <property type="molecule type" value="Genomic_DNA"/>
</dbReference>
<dbReference type="RefSeq" id="WP_015801070.1">
    <property type="nucleotide sequence ID" value="NC_013093.1"/>
</dbReference>
<dbReference type="SMR" id="C6WID8"/>
<dbReference type="STRING" id="446462.Amir_2241"/>
<dbReference type="KEGG" id="ami:Amir_2241"/>
<dbReference type="eggNOG" id="COG0638">
    <property type="taxonomic scope" value="Bacteria"/>
</dbReference>
<dbReference type="HOGENOM" id="CLU_035750_2_0_11"/>
<dbReference type="OrthoDB" id="5174038at2"/>
<dbReference type="UniPathway" id="UPA00997"/>
<dbReference type="Proteomes" id="UP000002213">
    <property type="component" value="Chromosome"/>
</dbReference>
<dbReference type="GO" id="GO:0005737">
    <property type="term" value="C:cytoplasm"/>
    <property type="evidence" value="ECO:0007669"/>
    <property type="project" value="UniProtKB-SubCell"/>
</dbReference>
<dbReference type="GO" id="GO:0019774">
    <property type="term" value="C:proteasome core complex, beta-subunit complex"/>
    <property type="evidence" value="ECO:0007669"/>
    <property type="project" value="UniProtKB-UniRule"/>
</dbReference>
<dbReference type="GO" id="GO:0004298">
    <property type="term" value="F:threonine-type endopeptidase activity"/>
    <property type="evidence" value="ECO:0007669"/>
    <property type="project" value="UniProtKB-UniRule"/>
</dbReference>
<dbReference type="GO" id="GO:0019941">
    <property type="term" value="P:modification-dependent protein catabolic process"/>
    <property type="evidence" value="ECO:0007669"/>
    <property type="project" value="UniProtKB-UniRule"/>
</dbReference>
<dbReference type="GO" id="GO:0010498">
    <property type="term" value="P:proteasomal protein catabolic process"/>
    <property type="evidence" value="ECO:0007669"/>
    <property type="project" value="UniProtKB-UniRule"/>
</dbReference>
<dbReference type="CDD" id="cd01906">
    <property type="entry name" value="proteasome_protease_HslV"/>
    <property type="match status" value="1"/>
</dbReference>
<dbReference type="FunFam" id="3.60.20.10:FF:000046">
    <property type="entry name" value="Proteasome subunit beta"/>
    <property type="match status" value="1"/>
</dbReference>
<dbReference type="Gene3D" id="3.60.20.10">
    <property type="entry name" value="Glutamine Phosphoribosylpyrophosphate, subunit 1, domain 1"/>
    <property type="match status" value="1"/>
</dbReference>
<dbReference type="HAMAP" id="MF_02113_B">
    <property type="entry name" value="Proteasome_B_B"/>
    <property type="match status" value="1"/>
</dbReference>
<dbReference type="InterPro" id="IPR029055">
    <property type="entry name" value="Ntn_hydrolases_N"/>
</dbReference>
<dbReference type="InterPro" id="IPR001353">
    <property type="entry name" value="Proteasome_sua/b"/>
</dbReference>
<dbReference type="InterPro" id="IPR023333">
    <property type="entry name" value="Proteasome_suB-type"/>
</dbReference>
<dbReference type="InterPro" id="IPR022483">
    <property type="entry name" value="PSB_actinobac"/>
</dbReference>
<dbReference type="NCBIfam" id="TIGR03690">
    <property type="entry name" value="20S_bact_beta"/>
    <property type="match status" value="1"/>
</dbReference>
<dbReference type="PANTHER" id="PTHR32194:SF0">
    <property type="entry name" value="ATP-DEPENDENT PROTEASE SUBUNIT HSLV"/>
    <property type="match status" value="1"/>
</dbReference>
<dbReference type="PANTHER" id="PTHR32194">
    <property type="entry name" value="METALLOPROTEASE TLDD"/>
    <property type="match status" value="1"/>
</dbReference>
<dbReference type="Pfam" id="PF00227">
    <property type="entry name" value="Proteasome"/>
    <property type="match status" value="1"/>
</dbReference>
<dbReference type="SUPFAM" id="SSF56235">
    <property type="entry name" value="N-terminal nucleophile aminohydrolases (Ntn hydrolases)"/>
    <property type="match status" value="1"/>
</dbReference>
<dbReference type="PROSITE" id="PS51476">
    <property type="entry name" value="PROTEASOME_BETA_2"/>
    <property type="match status" value="1"/>
</dbReference>
<comment type="function">
    <text evidence="1">Component of the proteasome core, a large protease complex with broad specificity involved in protein degradation.</text>
</comment>
<comment type="catalytic activity">
    <reaction evidence="1">
        <text>Cleavage of peptide bonds with very broad specificity.</text>
        <dbReference type="EC" id="3.4.25.1"/>
    </reaction>
</comment>
<comment type="activity regulation">
    <text evidence="1">The formation of the proteasomal ATPase ARC-20S proteasome complex, likely via the docking of the C-termini of ARC into the intersubunit pockets in the alpha-rings, may trigger opening of the gate for substrate entry. Interconversion between the open-gate and close-gate conformations leads to a dynamic regulation of the 20S proteasome proteolysis activity.</text>
</comment>
<comment type="pathway">
    <text evidence="1">Protein degradation; proteasomal Pup-dependent pathway.</text>
</comment>
<comment type="subunit">
    <text evidence="1">The 20S proteasome core is composed of 14 alpha and 14 beta subunits that assemble into four stacked heptameric rings, resulting in a barrel-shaped structure. The two inner rings, each composed of seven catalytic beta subunits, are sandwiched by two outer rings, each composed of seven alpha subunits. The catalytic chamber with the active sites is on the inside of the barrel. Has a gated structure, the ends of the cylinder being occluded by the N-termini of the alpha-subunits. Is capped by the proteasome-associated ATPase, ARC.</text>
</comment>
<comment type="subcellular location">
    <subcellularLocation>
        <location evidence="1">Cytoplasm</location>
    </subcellularLocation>
</comment>
<comment type="similarity">
    <text evidence="1">Belongs to the peptidase T1B family.</text>
</comment>
<protein>
    <recommendedName>
        <fullName evidence="1">Proteasome subunit beta</fullName>
        <ecNumber evidence="1">3.4.25.1</ecNumber>
    </recommendedName>
    <alternativeName>
        <fullName evidence="1">20S proteasome beta subunit</fullName>
    </alternativeName>
    <alternativeName>
        <fullName evidence="1">Proteasome core protein PrcB</fullName>
    </alternativeName>
</protein>
<gene>
    <name evidence="1" type="primary">prcB</name>
    <name type="ordered locus">Amir_2241</name>
</gene>
<sequence>MDNSSTGRYPAASLPPAYLRPGSSSFTDFLRAQAPELLPTARSFPEGSVVQAAHGTTIVALTFKGGVVIAGDRRATMGNVIAQRDMKKVFVTDDYSAVGIAGTAGIAIEIVRLFAVELRHYEKIEGVSLSLDGKANRLSGMVKGNLDAALAGLAVVPLFVGYDTDAADPDRAGRIVSYDVTGARFEETLGYQSVGSGSLFAKSALKKLYDPDADAEGAVRAAVEALYDAADDDSATGGPDLVRRIFPVVVTVTAEGAVHLPEERTSAIAETVVEGRRARPAG</sequence>